<comment type="function">
    <text evidence="1">Could be involved in insertion of integral membrane proteins into the membrane.</text>
</comment>
<comment type="subcellular location">
    <subcellularLocation>
        <location evidence="1">Cell inner membrane</location>
        <topology evidence="1">Peripheral membrane protein</topology>
        <orientation evidence="1">Cytoplasmic side</orientation>
    </subcellularLocation>
</comment>
<comment type="similarity">
    <text evidence="1">Belongs to the UPF0161 family.</text>
</comment>
<gene>
    <name type="ordered locus">BruAb1_1078</name>
</gene>
<keyword id="KW-0997">Cell inner membrane</keyword>
<keyword id="KW-1003">Cell membrane</keyword>
<keyword id="KW-0472">Membrane</keyword>
<name>YIDD_BRUAB</name>
<evidence type="ECO:0000255" key="1">
    <source>
        <dbReference type="HAMAP-Rule" id="MF_00386"/>
    </source>
</evidence>
<evidence type="ECO:0000256" key="2">
    <source>
        <dbReference type="SAM" id="MobiDB-lite"/>
    </source>
</evidence>
<sequence>MGSCGGKHTGKGAPKPYSRNFTDPWRKTPGRLFGTALIRFYQITLSSLIGNSCRHLPTCSEYAYEAIARHGLWRGGWMGFFRVVRCGPFGTHGFDPVPRELSPDLKWYMPWRYWRCSASRIGK</sequence>
<protein>
    <recommendedName>
        <fullName evidence="1">Putative membrane protein insertion efficiency factor</fullName>
    </recommendedName>
</protein>
<proteinExistence type="inferred from homology"/>
<organism>
    <name type="scientific">Brucella abortus biovar 1 (strain 9-941)</name>
    <dbReference type="NCBI Taxonomy" id="262698"/>
    <lineage>
        <taxon>Bacteria</taxon>
        <taxon>Pseudomonadati</taxon>
        <taxon>Pseudomonadota</taxon>
        <taxon>Alphaproteobacteria</taxon>
        <taxon>Hyphomicrobiales</taxon>
        <taxon>Brucellaceae</taxon>
        <taxon>Brucella/Ochrobactrum group</taxon>
        <taxon>Brucella</taxon>
    </lineage>
</organism>
<reference key="1">
    <citation type="journal article" date="2005" name="J. Bacteriol.">
        <title>Completion of the genome sequence of Brucella abortus and comparison to the highly similar genomes of Brucella melitensis and Brucella suis.</title>
        <authorList>
            <person name="Halling S.M."/>
            <person name="Peterson-Burch B.D."/>
            <person name="Bricker B.J."/>
            <person name="Zuerner R.L."/>
            <person name="Qing Z."/>
            <person name="Li L.-L."/>
            <person name="Kapur V."/>
            <person name="Alt D.P."/>
            <person name="Olsen S.C."/>
        </authorList>
    </citation>
    <scope>NUCLEOTIDE SEQUENCE [LARGE SCALE GENOMIC DNA]</scope>
    <source>
        <strain>9-941</strain>
    </source>
</reference>
<accession>Q57D63</accession>
<dbReference type="EMBL" id="AE017223">
    <property type="protein sequence ID" value="AAX74421.1"/>
    <property type="molecule type" value="Genomic_DNA"/>
</dbReference>
<dbReference type="EnsemblBacteria" id="AAX74421">
    <property type="protein sequence ID" value="AAX74421"/>
    <property type="gene ID" value="BruAb1_1078"/>
</dbReference>
<dbReference type="KEGG" id="bmb:BruAb1_1078"/>
<dbReference type="HOGENOM" id="CLU_144811_0_1_5"/>
<dbReference type="Proteomes" id="UP000000540">
    <property type="component" value="Chromosome I"/>
</dbReference>
<dbReference type="GO" id="GO:0005886">
    <property type="term" value="C:plasma membrane"/>
    <property type="evidence" value="ECO:0007669"/>
    <property type="project" value="UniProtKB-SubCell"/>
</dbReference>
<dbReference type="HAMAP" id="MF_00386">
    <property type="entry name" value="UPF0161_YidD"/>
    <property type="match status" value="1"/>
</dbReference>
<dbReference type="InterPro" id="IPR002696">
    <property type="entry name" value="Membr_insert_effic_factor_YidD"/>
</dbReference>
<dbReference type="NCBIfam" id="TIGR00278">
    <property type="entry name" value="membrane protein insertion efficiency factor YidD"/>
    <property type="match status" value="1"/>
</dbReference>
<dbReference type="PANTHER" id="PTHR33383">
    <property type="entry name" value="MEMBRANE PROTEIN INSERTION EFFICIENCY FACTOR-RELATED"/>
    <property type="match status" value="1"/>
</dbReference>
<dbReference type="PANTHER" id="PTHR33383:SF1">
    <property type="entry name" value="MEMBRANE PROTEIN INSERTION EFFICIENCY FACTOR-RELATED"/>
    <property type="match status" value="1"/>
</dbReference>
<dbReference type="Pfam" id="PF01809">
    <property type="entry name" value="YidD"/>
    <property type="match status" value="1"/>
</dbReference>
<dbReference type="SMART" id="SM01234">
    <property type="entry name" value="Haemolytic"/>
    <property type="match status" value="1"/>
</dbReference>
<feature type="chain" id="PRO_0000253084" description="Putative membrane protein insertion efficiency factor">
    <location>
        <begin position="1"/>
        <end position="123"/>
    </location>
</feature>
<feature type="region of interest" description="Disordered" evidence="2">
    <location>
        <begin position="1"/>
        <end position="23"/>
    </location>
</feature>